<reference key="1">
    <citation type="submission" date="2006-05" db="EMBL/GenBank/DDBJ databases">
        <authorList>
            <consortium name="Genoscope"/>
        </authorList>
    </citation>
    <scope>NUCLEOTIDE SEQUENCE [LARGE SCALE GENOMIC DNA]</scope>
    <source>
        <strain>WH7803</strain>
    </source>
</reference>
<name>FMT_SYNPW</name>
<keyword id="KW-0648">Protein biosynthesis</keyword>
<keyword id="KW-1185">Reference proteome</keyword>
<keyword id="KW-0808">Transferase</keyword>
<accession>A5GKR0</accession>
<dbReference type="EC" id="2.1.2.9" evidence="1"/>
<dbReference type="EMBL" id="CT971583">
    <property type="protein sequence ID" value="CAK23525.1"/>
    <property type="molecule type" value="Genomic_DNA"/>
</dbReference>
<dbReference type="SMR" id="A5GKR0"/>
<dbReference type="STRING" id="32051.SynWH7803_1099"/>
<dbReference type="KEGG" id="syx:SynWH7803_1099"/>
<dbReference type="eggNOG" id="COG0223">
    <property type="taxonomic scope" value="Bacteria"/>
</dbReference>
<dbReference type="HOGENOM" id="CLU_033347_1_1_3"/>
<dbReference type="OrthoDB" id="9802815at2"/>
<dbReference type="Proteomes" id="UP000001566">
    <property type="component" value="Chromosome"/>
</dbReference>
<dbReference type="GO" id="GO:0005829">
    <property type="term" value="C:cytosol"/>
    <property type="evidence" value="ECO:0007669"/>
    <property type="project" value="TreeGrafter"/>
</dbReference>
<dbReference type="GO" id="GO:0004479">
    <property type="term" value="F:methionyl-tRNA formyltransferase activity"/>
    <property type="evidence" value="ECO:0007669"/>
    <property type="project" value="UniProtKB-UniRule"/>
</dbReference>
<dbReference type="CDD" id="cd08646">
    <property type="entry name" value="FMT_core_Met-tRNA-FMT_N"/>
    <property type="match status" value="1"/>
</dbReference>
<dbReference type="CDD" id="cd08704">
    <property type="entry name" value="Met_tRNA_FMT_C"/>
    <property type="match status" value="1"/>
</dbReference>
<dbReference type="Gene3D" id="3.40.50.12230">
    <property type="match status" value="1"/>
</dbReference>
<dbReference type="HAMAP" id="MF_00182">
    <property type="entry name" value="Formyl_trans"/>
    <property type="match status" value="1"/>
</dbReference>
<dbReference type="InterPro" id="IPR005794">
    <property type="entry name" value="Fmt"/>
</dbReference>
<dbReference type="InterPro" id="IPR005793">
    <property type="entry name" value="Formyl_trans_C"/>
</dbReference>
<dbReference type="InterPro" id="IPR002376">
    <property type="entry name" value="Formyl_transf_N"/>
</dbReference>
<dbReference type="InterPro" id="IPR036477">
    <property type="entry name" value="Formyl_transf_N_sf"/>
</dbReference>
<dbReference type="InterPro" id="IPR011034">
    <property type="entry name" value="Formyl_transferase-like_C_sf"/>
</dbReference>
<dbReference type="InterPro" id="IPR044135">
    <property type="entry name" value="Met-tRNA-FMT_C"/>
</dbReference>
<dbReference type="InterPro" id="IPR041711">
    <property type="entry name" value="Met-tRNA-FMT_N"/>
</dbReference>
<dbReference type="NCBIfam" id="TIGR00460">
    <property type="entry name" value="fmt"/>
    <property type="match status" value="1"/>
</dbReference>
<dbReference type="PANTHER" id="PTHR11138">
    <property type="entry name" value="METHIONYL-TRNA FORMYLTRANSFERASE"/>
    <property type="match status" value="1"/>
</dbReference>
<dbReference type="PANTHER" id="PTHR11138:SF5">
    <property type="entry name" value="METHIONYL-TRNA FORMYLTRANSFERASE, MITOCHONDRIAL"/>
    <property type="match status" value="1"/>
</dbReference>
<dbReference type="Pfam" id="PF02911">
    <property type="entry name" value="Formyl_trans_C"/>
    <property type="match status" value="1"/>
</dbReference>
<dbReference type="Pfam" id="PF00551">
    <property type="entry name" value="Formyl_trans_N"/>
    <property type="match status" value="1"/>
</dbReference>
<dbReference type="SUPFAM" id="SSF50486">
    <property type="entry name" value="FMT C-terminal domain-like"/>
    <property type="match status" value="1"/>
</dbReference>
<dbReference type="SUPFAM" id="SSF53328">
    <property type="entry name" value="Formyltransferase"/>
    <property type="match status" value="1"/>
</dbReference>
<feature type="chain" id="PRO_1000020190" description="Methionyl-tRNA formyltransferase">
    <location>
        <begin position="1"/>
        <end position="340"/>
    </location>
</feature>
<feature type="binding site" evidence="1">
    <location>
        <begin position="110"/>
        <end position="113"/>
    </location>
    <ligand>
        <name>(6S)-5,6,7,8-tetrahydrofolate</name>
        <dbReference type="ChEBI" id="CHEBI:57453"/>
    </ligand>
</feature>
<comment type="function">
    <text evidence="1">Attaches a formyl group to the free amino group of methionyl-tRNA(fMet). The formyl group appears to play a dual role in the initiator identity of N-formylmethionyl-tRNA by promoting its recognition by IF2 and preventing the misappropriation of this tRNA by the elongation apparatus.</text>
</comment>
<comment type="catalytic activity">
    <reaction evidence="1">
        <text>L-methionyl-tRNA(fMet) + (6R)-10-formyltetrahydrofolate = N-formyl-L-methionyl-tRNA(fMet) + (6S)-5,6,7,8-tetrahydrofolate + H(+)</text>
        <dbReference type="Rhea" id="RHEA:24380"/>
        <dbReference type="Rhea" id="RHEA-COMP:9952"/>
        <dbReference type="Rhea" id="RHEA-COMP:9953"/>
        <dbReference type="ChEBI" id="CHEBI:15378"/>
        <dbReference type="ChEBI" id="CHEBI:57453"/>
        <dbReference type="ChEBI" id="CHEBI:78530"/>
        <dbReference type="ChEBI" id="CHEBI:78844"/>
        <dbReference type="ChEBI" id="CHEBI:195366"/>
        <dbReference type="EC" id="2.1.2.9"/>
    </reaction>
</comment>
<comment type="similarity">
    <text evidence="1">Belongs to the Fmt family.</text>
</comment>
<organism>
    <name type="scientific">Synechococcus sp. (strain WH7803)</name>
    <dbReference type="NCBI Taxonomy" id="32051"/>
    <lineage>
        <taxon>Bacteria</taxon>
        <taxon>Bacillati</taxon>
        <taxon>Cyanobacteriota</taxon>
        <taxon>Cyanophyceae</taxon>
        <taxon>Synechococcales</taxon>
        <taxon>Synechococcaceae</taxon>
        <taxon>Synechococcus</taxon>
    </lineage>
</organism>
<gene>
    <name evidence="1" type="primary">fmt</name>
    <name type="ordered locus">SynWH7803_1099</name>
</gene>
<evidence type="ECO:0000255" key="1">
    <source>
        <dbReference type="HAMAP-Rule" id="MF_00182"/>
    </source>
</evidence>
<sequence length="340" mass="37253">MKILFWGTPAYAVPTLDTLHEAGHQIVGVVTQPDRRRGRGKQLMPSPVKARAQELGCPVFTPERIRRDLDCQQQLNALDADVSVVVAFGQILPKDILQHPPLGCWNGHGSLLPRWRGAGPIQWSILEGDPETGVGIMAMEEGLDTGPVLLEQRLSINLLENAHQLGERLSRLSADLMLQAMPVIEAAGPGLEAERWSRLQVRHQPEEGTYARMLSKEDFQLNWGDSALTIHRKVMGLYPGAVTVWKDRRLKVLATEPLIERLADDLSDEARALVGRWNTGAHPPGQVLHSADSGLVVSTHGCPILIREAQLEGKARSHGQALIQQLQAQPGDSLGLAAKP</sequence>
<proteinExistence type="inferred from homology"/>
<protein>
    <recommendedName>
        <fullName evidence="1">Methionyl-tRNA formyltransferase</fullName>
        <ecNumber evidence="1">2.1.2.9</ecNumber>
    </recommendedName>
</protein>